<name>4CL1_ARATH</name>
<accession>Q42524</accession>
<accession>Q8RY63</accession>
<feature type="chain" id="PRO_0000193027" description="4-coumarate--CoA ligase 1">
    <location>
        <begin position="1"/>
        <end position="561"/>
    </location>
</feature>
<feature type="region of interest" description="SBD1" evidence="3">
    <location>
        <begin position="283"/>
        <end position="352"/>
    </location>
</feature>
<feature type="region of interest" description="SBD2" evidence="3">
    <location>
        <begin position="353"/>
        <end position="420"/>
    </location>
</feature>
<feature type="binding site" evidence="1">
    <location>
        <position position="210"/>
    </location>
    <ligand>
        <name>ATP</name>
        <dbReference type="ChEBI" id="CHEBI:30616"/>
    </ligand>
</feature>
<feature type="binding site" evidence="1">
    <location>
        <position position="211"/>
    </location>
    <ligand>
        <name>ATP</name>
        <dbReference type="ChEBI" id="CHEBI:30616"/>
    </ligand>
</feature>
<feature type="binding site" evidence="1">
    <location>
        <position position="212"/>
    </location>
    <ligand>
        <name>ATP</name>
        <dbReference type="ChEBI" id="CHEBI:30616"/>
    </ligand>
</feature>
<feature type="binding site" evidence="1">
    <location>
        <position position="213"/>
    </location>
    <ligand>
        <name>ATP</name>
        <dbReference type="ChEBI" id="CHEBI:30616"/>
    </ligand>
</feature>
<feature type="binding site" evidence="1">
    <location>
        <position position="214"/>
    </location>
    <ligand>
        <name>ATP</name>
        <dbReference type="ChEBI" id="CHEBI:30616"/>
    </ligand>
</feature>
<feature type="binding site" evidence="1">
    <location>
        <position position="218"/>
    </location>
    <ligand>
        <name>ATP</name>
        <dbReference type="ChEBI" id="CHEBI:30616"/>
    </ligand>
</feature>
<feature type="binding site" evidence="1">
    <location>
        <position position="260"/>
    </location>
    <ligand>
        <name>(E)-4-coumaroyl-AMP</name>
        <dbReference type="ChEBI" id="CHEBI:192348"/>
    </ligand>
</feature>
<feature type="binding site" evidence="1">
    <location>
        <position position="264"/>
    </location>
    <ligand>
        <name>(E)-4-coumaroyl-AMP</name>
        <dbReference type="ChEBI" id="CHEBI:192348"/>
    </ligand>
</feature>
<feature type="binding site" evidence="1">
    <location>
        <position position="281"/>
    </location>
    <ligand>
        <name>CoA</name>
        <dbReference type="ChEBI" id="CHEBI:57287"/>
    </ligand>
</feature>
<feature type="binding site" evidence="1">
    <location>
        <position position="330"/>
    </location>
    <ligand>
        <name>(E)-4-coumaroyl-AMP</name>
        <dbReference type="ChEBI" id="CHEBI:192348"/>
    </ligand>
</feature>
<feature type="binding site" evidence="1">
    <location>
        <position position="352"/>
    </location>
    <ligand>
        <name>(E)-4-coumaroyl-AMP</name>
        <dbReference type="ChEBI" id="CHEBI:192348"/>
    </ligand>
</feature>
<feature type="binding site" evidence="1">
    <location>
        <position position="352"/>
    </location>
    <ligand>
        <name>ATP</name>
        <dbReference type="ChEBI" id="CHEBI:30616"/>
    </ligand>
</feature>
<feature type="binding site" evidence="1">
    <location>
        <position position="353"/>
    </location>
    <ligand>
        <name>(E)-4-coumaroyl-AMP</name>
        <dbReference type="ChEBI" id="CHEBI:192348"/>
    </ligand>
</feature>
<feature type="binding site" evidence="1">
    <location>
        <position position="353"/>
    </location>
    <ligand>
        <name>ATP</name>
        <dbReference type="ChEBI" id="CHEBI:30616"/>
    </ligand>
</feature>
<feature type="binding site" evidence="1">
    <location>
        <position position="357"/>
    </location>
    <ligand>
        <name>(E)-4-coumaroyl-AMP</name>
        <dbReference type="ChEBI" id="CHEBI:192348"/>
    </ligand>
</feature>
<feature type="binding site" evidence="1">
    <location>
        <position position="357"/>
    </location>
    <ligand>
        <name>ATP</name>
        <dbReference type="ChEBI" id="CHEBI:30616"/>
    </ligand>
</feature>
<feature type="binding site" evidence="1">
    <location>
        <position position="365"/>
    </location>
    <ligand>
        <name>(E)-4-coumaroyl-AMP</name>
        <dbReference type="ChEBI" id="CHEBI:192348"/>
    </ligand>
</feature>
<feature type="binding site" evidence="1">
    <location>
        <position position="441"/>
    </location>
    <ligand>
        <name>ATP</name>
        <dbReference type="ChEBI" id="CHEBI:30616"/>
    </ligand>
</feature>
<feature type="binding site" evidence="1">
    <location>
        <position position="456"/>
    </location>
    <ligand>
        <name>ATP</name>
        <dbReference type="ChEBI" id="CHEBI:30616"/>
    </ligand>
</feature>
<feature type="binding site" evidence="1">
    <location>
        <position position="458"/>
    </location>
    <ligand>
        <name>(E)-4-coumaroyl-AMP</name>
        <dbReference type="ChEBI" id="CHEBI:192348"/>
    </ligand>
</feature>
<feature type="binding site" evidence="1">
    <location>
        <position position="462"/>
    </location>
    <ligand>
        <name>(E)-4-coumaroyl-AMP</name>
        <dbReference type="ChEBI" id="CHEBI:192348"/>
    </ligand>
</feature>
<feature type="binding site" evidence="1">
    <location>
        <position position="464"/>
    </location>
    <ligand>
        <name>CoA</name>
        <dbReference type="ChEBI" id="CHEBI:57287"/>
    </ligand>
</feature>
<feature type="binding site" evidence="1">
    <location>
        <position position="465"/>
    </location>
    <ligand>
        <name>CoA</name>
        <dbReference type="ChEBI" id="CHEBI:57287"/>
    </ligand>
</feature>
<feature type="binding site" evidence="1">
    <location>
        <position position="547"/>
    </location>
    <ligand>
        <name>ATP</name>
        <dbReference type="ChEBI" id="CHEBI:30616"/>
    </ligand>
</feature>
<feature type="splice variant" id="VSP_008911" description="In isoform 2." evidence="6">
    <location>
        <begin position="491"/>
        <end position="561"/>
    </location>
</feature>
<feature type="helix" evidence="12">
    <location>
        <begin position="40"/>
        <end position="44"/>
    </location>
</feature>
<feature type="turn" evidence="12">
    <location>
        <begin position="45"/>
        <end position="47"/>
    </location>
</feature>
<feature type="helix" evidence="12">
    <location>
        <begin position="48"/>
        <end position="50"/>
    </location>
</feature>
<feature type="turn" evidence="12">
    <location>
        <begin position="51"/>
        <end position="53"/>
    </location>
</feature>
<feature type="strand" evidence="12">
    <location>
        <begin position="54"/>
        <end position="59"/>
    </location>
</feature>
<feature type="turn" evidence="12">
    <location>
        <begin position="60"/>
        <end position="62"/>
    </location>
</feature>
<feature type="strand" evidence="12">
    <location>
        <begin position="65"/>
        <end position="67"/>
    </location>
</feature>
<feature type="helix" evidence="12">
    <location>
        <begin position="68"/>
        <end position="84"/>
    </location>
</feature>
<feature type="strand" evidence="12">
    <location>
        <begin position="92"/>
        <end position="96"/>
    </location>
</feature>
<feature type="helix" evidence="12">
    <location>
        <begin position="101"/>
        <end position="113"/>
    </location>
</feature>
<feature type="strand" evidence="12">
    <location>
        <begin position="116"/>
        <end position="120"/>
    </location>
</feature>
<feature type="helix" evidence="12">
    <location>
        <begin position="126"/>
        <end position="136"/>
    </location>
</feature>
<feature type="strand" evidence="12">
    <location>
        <begin position="138"/>
        <end position="143"/>
    </location>
</feature>
<feature type="turn" evidence="12">
    <location>
        <begin position="146"/>
        <end position="150"/>
    </location>
</feature>
<feature type="helix" evidence="12">
    <location>
        <begin position="152"/>
        <end position="156"/>
    </location>
</feature>
<feature type="strand" evidence="12">
    <location>
        <begin position="161"/>
        <end position="164"/>
    </location>
</feature>
<feature type="strand" evidence="12">
    <location>
        <begin position="177"/>
        <end position="179"/>
    </location>
</feature>
<feature type="helix" evidence="12">
    <location>
        <begin position="180"/>
        <end position="182"/>
    </location>
</feature>
<feature type="helix" evidence="12">
    <location>
        <begin position="189"/>
        <end position="193"/>
    </location>
</feature>
<feature type="strand" evidence="12">
    <location>
        <begin position="203"/>
        <end position="206"/>
    </location>
</feature>
<feature type="strand" evidence="12">
    <location>
        <begin position="213"/>
        <end position="216"/>
    </location>
</feature>
<feature type="strand" evidence="12">
    <location>
        <begin position="219"/>
        <end position="223"/>
    </location>
</feature>
<feature type="helix" evidence="12">
    <location>
        <begin position="224"/>
        <end position="235"/>
    </location>
</feature>
<feature type="strand" evidence="12">
    <location>
        <begin position="237"/>
        <end position="239"/>
    </location>
</feature>
<feature type="strand" evidence="12">
    <location>
        <begin position="249"/>
        <end position="252"/>
    </location>
</feature>
<feature type="strand" evidence="12">
    <location>
        <begin position="256"/>
        <end position="258"/>
    </location>
</feature>
<feature type="helix" evidence="12">
    <location>
        <begin position="259"/>
        <end position="264"/>
    </location>
</feature>
<feature type="helix" evidence="12">
    <location>
        <begin position="266"/>
        <end position="272"/>
    </location>
</feature>
<feature type="strand" evidence="12">
    <location>
        <begin position="275"/>
        <end position="278"/>
    </location>
</feature>
<feature type="helix" evidence="12">
    <location>
        <begin position="284"/>
        <end position="294"/>
    </location>
</feature>
<feature type="strand" evidence="12">
    <location>
        <begin position="298"/>
        <end position="301"/>
    </location>
</feature>
<feature type="helix" evidence="12">
    <location>
        <begin position="303"/>
        <end position="311"/>
    </location>
</feature>
<feature type="helix" evidence="12">
    <location>
        <begin position="313"/>
        <end position="316"/>
    </location>
</feature>
<feature type="strand" evidence="12">
    <location>
        <begin position="325"/>
        <end position="330"/>
    </location>
</feature>
<feature type="helix" evidence="12">
    <location>
        <begin position="337"/>
        <end position="344"/>
    </location>
</feature>
<feature type="strand" evidence="12">
    <location>
        <begin position="349"/>
        <end position="352"/>
    </location>
</feature>
<feature type="helix" evidence="12">
    <location>
        <begin position="357"/>
        <end position="359"/>
    </location>
</feature>
<feature type="strand" evidence="12">
    <location>
        <begin position="361"/>
        <end position="365"/>
    </location>
</feature>
<feature type="helix" evidence="12">
    <location>
        <begin position="367"/>
        <end position="369"/>
    </location>
</feature>
<feature type="strand" evidence="12">
    <location>
        <begin position="370"/>
        <end position="372"/>
    </location>
</feature>
<feature type="strand" evidence="12">
    <location>
        <begin position="389"/>
        <end position="393"/>
    </location>
</feature>
<feature type="strand" evidence="12">
    <location>
        <begin position="407"/>
        <end position="413"/>
    </location>
</feature>
<feature type="strand" evidence="12">
    <location>
        <begin position="418"/>
        <end position="420"/>
    </location>
</feature>
<feature type="helix" evidence="12">
    <location>
        <begin position="424"/>
        <end position="430"/>
    </location>
</feature>
<feature type="strand" evidence="12">
    <location>
        <begin position="437"/>
        <end position="445"/>
    </location>
</feature>
<feature type="strand" evidence="12">
    <location>
        <begin position="451"/>
        <end position="457"/>
    </location>
</feature>
<keyword id="KW-0002">3D-structure</keyword>
<keyword id="KW-0025">Alternative splicing</keyword>
<keyword id="KW-0067">ATP-binding</keyword>
<keyword id="KW-0436">Ligase</keyword>
<keyword id="KW-0460">Magnesium</keyword>
<keyword id="KW-0547">Nucleotide-binding</keyword>
<keyword id="KW-0587">Phenylpropanoid metabolism</keyword>
<keyword id="KW-1185">Reference proteome</keyword>
<reference key="1">
    <citation type="journal article" date="1995" name="Plant Mol. Biol.">
        <title>The Arabidopsis thaliana 4-coumarate:CoA ligase (4CL) gene: stress and developmentally regulated expression and nucleotide sequence of its cDNA.</title>
        <authorList>
            <person name="Lee D."/>
            <person name="Ellard M."/>
            <person name="Wanner L.A."/>
            <person name="Davis K.R."/>
            <person name="Douglas C.J."/>
        </authorList>
    </citation>
    <scope>NUCLEOTIDE SEQUENCE [MRNA] (ISOFORM 1)</scope>
</reference>
<reference key="2">
    <citation type="journal article" date="1999" name="Plant J.">
        <title>Three 4-coumarate:coenzyme A ligases in Arabidopsis thaliana represent two evolutionarily divergent classes in angiosperms.</title>
        <authorList>
            <person name="Ehlting J."/>
            <person name="Buettner D."/>
            <person name="Wang Q."/>
            <person name="Douglas C.J."/>
            <person name="Somssich I.E."/>
            <person name="Kombrink E."/>
        </authorList>
    </citation>
    <scope>NUCLEOTIDE SEQUENCE [GENOMIC DNA]</scope>
    <scope>TISSUE SPECIFICITY</scope>
    <scope>INDUCTION</scope>
    <scope>CATALYTIC ACTIVITY</scope>
    <scope>FUNCTION</scope>
    <scope>PATHWAY</scope>
    <scope>BIOPHYSICOCHEMICAL PROPERTIES</scope>
    <source>
        <strain>cv. Columbia</strain>
    </source>
</reference>
<reference key="3">
    <citation type="submission" date="2003-08" db="EMBL/GenBank/DDBJ databases">
        <title>Functional classification of Arabidopsis thaliana 4-coumarate CoA ligase genes.</title>
        <authorList>
            <person name="Lawrence P.K."/>
        </authorList>
    </citation>
    <scope>NUCLEOTIDE SEQUENCE [MRNA] (ISOFORM 1)</scope>
</reference>
<reference key="4">
    <citation type="journal article" date="2000" name="Nature">
        <title>Sequence and analysis of chromosome 1 of the plant Arabidopsis thaliana.</title>
        <authorList>
            <person name="Theologis A."/>
            <person name="Ecker J.R."/>
            <person name="Palm C.J."/>
            <person name="Federspiel N.A."/>
            <person name="Kaul S."/>
            <person name="White O."/>
            <person name="Alonso J."/>
            <person name="Altafi H."/>
            <person name="Araujo R."/>
            <person name="Bowman C.L."/>
            <person name="Brooks S.Y."/>
            <person name="Buehler E."/>
            <person name="Chan A."/>
            <person name="Chao Q."/>
            <person name="Chen H."/>
            <person name="Cheuk R.F."/>
            <person name="Chin C.W."/>
            <person name="Chung M.K."/>
            <person name="Conn L."/>
            <person name="Conway A.B."/>
            <person name="Conway A.R."/>
            <person name="Creasy T.H."/>
            <person name="Dewar K."/>
            <person name="Dunn P."/>
            <person name="Etgu P."/>
            <person name="Feldblyum T.V."/>
            <person name="Feng J.-D."/>
            <person name="Fong B."/>
            <person name="Fujii C.Y."/>
            <person name="Gill J.E."/>
            <person name="Goldsmith A.D."/>
            <person name="Haas B."/>
            <person name="Hansen N.F."/>
            <person name="Hughes B."/>
            <person name="Huizar L."/>
            <person name="Hunter J.L."/>
            <person name="Jenkins J."/>
            <person name="Johnson-Hopson C."/>
            <person name="Khan S."/>
            <person name="Khaykin E."/>
            <person name="Kim C.J."/>
            <person name="Koo H.L."/>
            <person name="Kremenetskaia I."/>
            <person name="Kurtz D.B."/>
            <person name="Kwan A."/>
            <person name="Lam B."/>
            <person name="Langin-Hooper S."/>
            <person name="Lee A."/>
            <person name="Lee J.M."/>
            <person name="Lenz C.A."/>
            <person name="Li J.H."/>
            <person name="Li Y.-P."/>
            <person name="Lin X."/>
            <person name="Liu S.X."/>
            <person name="Liu Z.A."/>
            <person name="Luros J.S."/>
            <person name="Maiti R."/>
            <person name="Marziali A."/>
            <person name="Militscher J."/>
            <person name="Miranda M."/>
            <person name="Nguyen M."/>
            <person name="Nierman W.C."/>
            <person name="Osborne B.I."/>
            <person name="Pai G."/>
            <person name="Peterson J."/>
            <person name="Pham P.K."/>
            <person name="Rizzo M."/>
            <person name="Rooney T."/>
            <person name="Rowley D."/>
            <person name="Sakano H."/>
            <person name="Salzberg S.L."/>
            <person name="Schwartz J.R."/>
            <person name="Shinn P."/>
            <person name="Southwick A.M."/>
            <person name="Sun H."/>
            <person name="Tallon L.J."/>
            <person name="Tambunga G."/>
            <person name="Toriumi M.J."/>
            <person name="Town C.D."/>
            <person name="Utterback T."/>
            <person name="Van Aken S."/>
            <person name="Vaysberg M."/>
            <person name="Vysotskaia V.S."/>
            <person name="Walker M."/>
            <person name="Wu D."/>
            <person name="Yu G."/>
            <person name="Fraser C.M."/>
            <person name="Venter J.C."/>
            <person name="Davis R.W."/>
        </authorList>
    </citation>
    <scope>NUCLEOTIDE SEQUENCE [LARGE SCALE GENOMIC DNA]</scope>
    <source>
        <strain>cv. Columbia</strain>
    </source>
</reference>
<reference key="5">
    <citation type="journal article" date="2017" name="Plant J.">
        <title>Araport11: a complete reannotation of the Arabidopsis thaliana reference genome.</title>
        <authorList>
            <person name="Cheng C.Y."/>
            <person name="Krishnakumar V."/>
            <person name="Chan A.P."/>
            <person name="Thibaud-Nissen F."/>
            <person name="Schobel S."/>
            <person name="Town C.D."/>
        </authorList>
    </citation>
    <scope>GENOME REANNOTATION</scope>
    <source>
        <strain>cv. Columbia</strain>
    </source>
</reference>
<reference key="6">
    <citation type="journal article" date="2003" name="Science">
        <title>Empirical analysis of transcriptional activity in the Arabidopsis genome.</title>
        <authorList>
            <person name="Yamada K."/>
            <person name="Lim J."/>
            <person name="Dale J.M."/>
            <person name="Chen H."/>
            <person name="Shinn P."/>
            <person name="Palm C.J."/>
            <person name="Southwick A.M."/>
            <person name="Wu H.C."/>
            <person name="Kim C.J."/>
            <person name="Nguyen M."/>
            <person name="Pham P.K."/>
            <person name="Cheuk R.F."/>
            <person name="Karlin-Newmann G."/>
            <person name="Liu S.X."/>
            <person name="Lam B."/>
            <person name="Sakano H."/>
            <person name="Wu T."/>
            <person name="Yu G."/>
            <person name="Miranda M."/>
            <person name="Quach H.L."/>
            <person name="Tripp M."/>
            <person name="Chang C.H."/>
            <person name="Lee J.M."/>
            <person name="Toriumi M.J."/>
            <person name="Chan M.M."/>
            <person name="Tang C.C."/>
            <person name="Onodera C.S."/>
            <person name="Deng J.M."/>
            <person name="Akiyama K."/>
            <person name="Ansari Y."/>
            <person name="Arakawa T."/>
            <person name="Banh J."/>
            <person name="Banno F."/>
            <person name="Bowser L."/>
            <person name="Brooks S.Y."/>
            <person name="Carninci P."/>
            <person name="Chao Q."/>
            <person name="Choy N."/>
            <person name="Enju A."/>
            <person name="Goldsmith A.D."/>
            <person name="Gurjal M."/>
            <person name="Hansen N.F."/>
            <person name="Hayashizaki Y."/>
            <person name="Johnson-Hopson C."/>
            <person name="Hsuan V.W."/>
            <person name="Iida K."/>
            <person name="Karnes M."/>
            <person name="Khan S."/>
            <person name="Koesema E."/>
            <person name="Ishida J."/>
            <person name="Jiang P.X."/>
            <person name="Jones T."/>
            <person name="Kawai J."/>
            <person name="Kamiya A."/>
            <person name="Meyers C."/>
            <person name="Nakajima M."/>
            <person name="Narusaka M."/>
            <person name="Seki M."/>
            <person name="Sakurai T."/>
            <person name="Satou M."/>
            <person name="Tamse R."/>
            <person name="Vaysberg M."/>
            <person name="Wallender E.K."/>
            <person name="Wong C."/>
            <person name="Yamamura Y."/>
            <person name="Yuan S."/>
            <person name="Shinozaki K."/>
            <person name="Davis R.W."/>
            <person name="Theologis A."/>
            <person name="Ecker J.R."/>
        </authorList>
    </citation>
    <scope>NUCLEOTIDE SEQUENCE [LARGE SCALE MRNA] (ISOFORMS 1 AND 2)</scope>
    <source>
        <strain>cv. Columbia</strain>
    </source>
</reference>
<reference key="7">
    <citation type="journal article" date="2001" name="Plant J.">
        <title>Identification of 4-coumarate:coenzyme A ligase (4CL) substrate recognition domains.</title>
        <authorList>
            <person name="Ehlting J."/>
            <person name="Shin J.J.K."/>
            <person name="Douglas C.J."/>
        </authorList>
    </citation>
    <scope>SUBSTRATE-BINDING DOMAINS</scope>
</reference>
<reference key="8">
    <citation type="journal article" date="2003" name="Plant Physiol.">
        <title>Arabidopsis contains a large superfamily of acyl-activating enzymes. Phylogenetic and biochemical analysis reveals a new class of acyl-coenzyme a synthetases.</title>
        <authorList>
            <person name="Shockey J.M."/>
            <person name="Fulda M.S."/>
            <person name="Browse J."/>
        </authorList>
    </citation>
    <scope>GENE FAMILY ORGANIZATION</scope>
</reference>
<reference key="9">
    <citation type="journal article" date="2003" name="Proc. Natl. Acad. Sci. U.S.A.">
        <title>The substrate specificity-determining amino acid code of 4-coumarate:CoA ligase.</title>
        <authorList>
            <person name="Schneider K."/>
            <person name="Hoevel K."/>
            <person name="Witzel K."/>
            <person name="Hamberger B."/>
            <person name="Schomburg D."/>
            <person name="Kombrink E."/>
            <person name="Stuible H.-P."/>
        </authorList>
    </citation>
    <scope>GENE FAMILY ORGANIZATION</scope>
</reference>
<reference key="10">
    <citation type="journal article" date="2005" name="J. Biol. Chem.">
        <title>A new type of peroxisomal acyl-coenzyme A synthetase from Arabidopsis thaliana has the catalytic capacity to activate biosynthetic precursors of jasmonic acid.</title>
        <authorList>
            <person name="Schneider K."/>
            <person name="Kienow L."/>
            <person name="Schmelzer E."/>
            <person name="Colby T."/>
            <person name="Bartsch M."/>
            <person name="Miersch O."/>
            <person name="Wasternack C."/>
            <person name="Kombrink E."/>
            <person name="Stuible H.-P."/>
        </authorList>
    </citation>
    <scope>TISSUE SPECIFICITY</scope>
</reference>
<reference key="11">
    <citation type="journal article" date="2006" name="Planta">
        <title>Multiple cis-regulatory elements regulate distinct and complex patterns of developmental and wound-induced expression of Arabidopsis thaliana 4CL gene family members.</title>
        <authorList>
            <person name="Soltani B.M."/>
            <person name="Ehlting J."/>
            <person name="Hamberger B."/>
            <person name="Douglas C.J."/>
        </authorList>
    </citation>
    <scope>INDUCTION BY WOUNDING</scope>
</reference>
<reference key="12">
    <citation type="journal article" date="2011" name="J. Am. Chem. Soc.">
        <title>Structural and kinetic analysis of the unnatural fusion protein 4-coumaroyl-CoA ligase::stilbene synthase.</title>
        <authorList>
            <person name="Wang Y."/>
            <person name="Yi H."/>
            <person name="Wang M."/>
            <person name="Yu O."/>
            <person name="Jez J.M."/>
        </authorList>
    </citation>
    <scope>X-RAY CRYSTALLOGRAPHY (3.10 ANGSTROMS)</scope>
</reference>
<organism>
    <name type="scientific">Arabidopsis thaliana</name>
    <name type="common">Mouse-ear cress</name>
    <dbReference type="NCBI Taxonomy" id="3702"/>
    <lineage>
        <taxon>Eukaryota</taxon>
        <taxon>Viridiplantae</taxon>
        <taxon>Streptophyta</taxon>
        <taxon>Embryophyta</taxon>
        <taxon>Tracheophyta</taxon>
        <taxon>Spermatophyta</taxon>
        <taxon>Magnoliopsida</taxon>
        <taxon>eudicotyledons</taxon>
        <taxon>Gunneridae</taxon>
        <taxon>Pentapetalae</taxon>
        <taxon>rosids</taxon>
        <taxon>malvids</taxon>
        <taxon>Brassicales</taxon>
        <taxon>Brassicaceae</taxon>
        <taxon>Camelineae</taxon>
        <taxon>Arabidopsis</taxon>
    </lineage>
</organism>
<protein>
    <recommendedName>
        <fullName evidence="7">4-coumarate--CoA ligase 1</fullName>
        <shortName evidence="7">4CL 1</shortName>
        <ecNumber evidence="2">6.2.1.12</ecNumber>
    </recommendedName>
    <alternativeName>
        <fullName evidence="8">(E)-ferulate--CoA ligase</fullName>
        <ecNumber evidence="2">6.2.1.34</ecNumber>
    </alternativeName>
    <alternativeName>
        <fullName evidence="7">4-coumarate--CoA ligase isoform 1</fullName>
        <shortName evidence="7">At4CL1</shortName>
    </alternativeName>
    <alternativeName>
        <fullName evidence="7">4-coumaroyl-CoA synthase 1</fullName>
    </alternativeName>
</protein>
<sequence>MAPQEQAVSQVMEKQSNNNNSDVIFRSKLPDIYIPNHLSLHDYIFQNISEFATKPCLINGPTGHVYTYSDVHVISRQIAANFHKLGVNQNDVVMLLLPNCPEFVLSFLAASFRGATATAANPFFTPAEIAKQAKASNTKLIITEARYVDKIKPLQNDDGVVIVCIDDNESVPIPEGCLRFTELTQSTTEASEVIDSVEISPDDVVALPYSSGTTGLPKGVMLTHKGLVTSVAQQVDGENPNLYFHSDDVILCVLPMFHIYALNSIMLCGLRVGAAILIMPKFEINLLLELIQRCKVTVAPMVPPIVLAIAKSSETEKYDLSSIRVVKSGAAPLGKELEDAVNAKFPNAKLGQGYGMTEAGPVLAMSLGFAKEPFPVKSGACGTVVRNAEMKIVDPDTGDSLSRNQPGEICIRGHQIMKGYLNNPAATAETIDKDGWLHTGDIGLIDDDDELFIVDRLKELIKYKGFQVAPAELEALLIGHPDITDVAVVAMKEEAAGEVPVAFVVKSKDSELSEDDVKQFVSKQVVFYKRINKVFFTESIPKAPSGKILRKDLRAKLANGL</sequence>
<proteinExistence type="evidence at protein level"/>
<evidence type="ECO:0000250" key="1">
    <source>
        <dbReference type="UniProtKB" id="O24146"/>
    </source>
</evidence>
<evidence type="ECO:0000269" key="2">
    <source>
    </source>
</evidence>
<evidence type="ECO:0000269" key="3">
    <source>
    </source>
</evidence>
<evidence type="ECO:0000269" key="4">
    <source>
    </source>
</evidence>
<evidence type="ECO:0000269" key="5">
    <source>
    </source>
</evidence>
<evidence type="ECO:0000303" key="6">
    <source>
    </source>
</evidence>
<evidence type="ECO:0000303" key="7">
    <source>
    </source>
</evidence>
<evidence type="ECO:0000305" key="8"/>
<evidence type="ECO:0000305" key="9">
    <source>
    </source>
</evidence>
<evidence type="ECO:0000312" key="10">
    <source>
        <dbReference type="Araport" id="AT1G51680"/>
    </source>
</evidence>
<evidence type="ECO:0000312" key="11">
    <source>
        <dbReference type="EMBL" id="AAG50881.1"/>
    </source>
</evidence>
<evidence type="ECO:0007829" key="12">
    <source>
        <dbReference type="PDB" id="3TSY"/>
    </source>
</evidence>
<gene>
    <name evidence="7" type="primary">4CL1</name>
    <name evidence="10" type="ordered locus">At1g51680</name>
    <name evidence="11" type="ORF">F19C24.11</name>
</gene>
<comment type="function">
    <text evidence="1 2">Produces CoA thioesters of a variety of hydroxy- and methoxy-substituted cinnamic acids, which are used to synthesize several phenylpropanoid-derived compounds, including anthocyanins, flavonoids, isoflavonoids, coumarins, lignin, suberin and wall-bound phenolics (PubMed:10417722). Follows a two-step reaction mechanism, wherein the carboxylate substrate first undergoes adenylation by ATP, followed by a thioesterification in the presence of CoA to yield the final CoA thioesters (By similarity).</text>
</comment>
<comment type="catalytic activity">
    <reaction evidence="2">
        <text>(E)-4-coumarate + ATP + CoA = (E)-4-coumaroyl-CoA + AMP + diphosphate</text>
        <dbReference type="Rhea" id="RHEA:19641"/>
        <dbReference type="ChEBI" id="CHEBI:12876"/>
        <dbReference type="ChEBI" id="CHEBI:30616"/>
        <dbReference type="ChEBI" id="CHEBI:33019"/>
        <dbReference type="ChEBI" id="CHEBI:57287"/>
        <dbReference type="ChEBI" id="CHEBI:85008"/>
        <dbReference type="ChEBI" id="CHEBI:456215"/>
        <dbReference type="EC" id="6.2.1.12"/>
    </reaction>
    <physiologicalReaction direction="left-to-right" evidence="2">
        <dbReference type="Rhea" id="RHEA:19642"/>
    </physiologicalReaction>
</comment>
<comment type="catalytic activity">
    <reaction evidence="2">
        <text>(E)-caffeate + ATP + CoA = (E)-caffeoyl-CoA + AMP + diphosphate</text>
        <dbReference type="Rhea" id="RHEA:36299"/>
        <dbReference type="ChEBI" id="CHEBI:30616"/>
        <dbReference type="ChEBI" id="CHEBI:33019"/>
        <dbReference type="ChEBI" id="CHEBI:57287"/>
        <dbReference type="ChEBI" id="CHEBI:57770"/>
        <dbReference type="ChEBI" id="CHEBI:87136"/>
        <dbReference type="ChEBI" id="CHEBI:456215"/>
    </reaction>
    <physiologicalReaction direction="left-to-right" evidence="2">
        <dbReference type="Rhea" id="RHEA:36300"/>
    </physiologicalReaction>
</comment>
<comment type="catalytic activity">
    <reaction evidence="2">
        <text>(E)-ferulate + ATP + CoA = (E)-feruloyl-CoA + AMP + diphosphate</text>
        <dbReference type="Rhea" id="RHEA:36251"/>
        <dbReference type="ChEBI" id="CHEBI:29749"/>
        <dbReference type="ChEBI" id="CHEBI:30616"/>
        <dbReference type="ChEBI" id="CHEBI:33019"/>
        <dbReference type="ChEBI" id="CHEBI:57287"/>
        <dbReference type="ChEBI" id="CHEBI:87305"/>
        <dbReference type="ChEBI" id="CHEBI:456215"/>
        <dbReference type="EC" id="6.2.1.34"/>
    </reaction>
    <physiologicalReaction direction="left-to-right" evidence="2">
        <dbReference type="Rhea" id="RHEA:36252"/>
    </physiologicalReaction>
</comment>
<comment type="catalytic activity">
    <reaction evidence="9">
        <text>(E)-4-coumarate + ATP + H(+) = (E)-4-coumaroyl-AMP + diphosphate</text>
        <dbReference type="Rhea" id="RHEA:72419"/>
        <dbReference type="ChEBI" id="CHEBI:12876"/>
        <dbReference type="ChEBI" id="CHEBI:15378"/>
        <dbReference type="ChEBI" id="CHEBI:30616"/>
        <dbReference type="ChEBI" id="CHEBI:33019"/>
        <dbReference type="ChEBI" id="CHEBI:192348"/>
    </reaction>
    <physiologicalReaction direction="left-to-right" evidence="9">
        <dbReference type="Rhea" id="RHEA:72420"/>
    </physiologicalReaction>
</comment>
<comment type="catalytic activity">
    <reaction evidence="9">
        <text>(E)-4-coumaroyl-AMP + CoA = (E)-4-coumaroyl-CoA + AMP + H(+)</text>
        <dbReference type="Rhea" id="RHEA:72423"/>
        <dbReference type="ChEBI" id="CHEBI:15378"/>
        <dbReference type="ChEBI" id="CHEBI:57287"/>
        <dbReference type="ChEBI" id="CHEBI:85008"/>
        <dbReference type="ChEBI" id="CHEBI:192348"/>
        <dbReference type="ChEBI" id="CHEBI:456215"/>
    </reaction>
    <physiologicalReaction direction="left-to-right" evidence="9">
        <dbReference type="Rhea" id="RHEA:72424"/>
    </physiologicalReaction>
</comment>
<comment type="catalytic activity">
    <reaction evidence="9">
        <text>(E)-caffeate + ATP + H(+) = (E)-caffeoyl-AMP + diphosphate</text>
        <dbReference type="Rhea" id="RHEA:72431"/>
        <dbReference type="ChEBI" id="CHEBI:15378"/>
        <dbReference type="ChEBI" id="CHEBI:30616"/>
        <dbReference type="ChEBI" id="CHEBI:33019"/>
        <dbReference type="ChEBI" id="CHEBI:57770"/>
        <dbReference type="ChEBI" id="CHEBI:192349"/>
    </reaction>
    <physiologicalReaction direction="left-to-right" evidence="9">
        <dbReference type="Rhea" id="RHEA:72432"/>
    </physiologicalReaction>
</comment>
<comment type="catalytic activity">
    <reaction evidence="9">
        <text>(E)-caffeoyl-AMP + CoA = (E)-caffeoyl-CoA + AMP + H(+)</text>
        <dbReference type="Rhea" id="RHEA:72435"/>
        <dbReference type="ChEBI" id="CHEBI:15378"/>
        <dbReference type="ChEBI" id="CHEBI:57287"/>
        <dbReference type="ChEBI" id="CHEBI:87136"/>
        <dbReference type="ChEBI" id="CHEBI:192349"/>
        <dbReference type="ChEBI" id="CHEBI:456215"/>
    </reaction>
    <physiologicalReaction direction="left-to-right" evidence="9">
        <dbReference type="Rhea" id="RHEA:72436"/>
    </physiologicalReaction>
</comment>
<comment type="catalytic activity">
    <reaction evidence="9">
        <text>(E)-ferulate + ATP + H(+) = (E)-feruloyl-AMP + diphosphate</text>
        <dbReference type="Rhea" id="RHEA:72439"/>
        <dbReference type="ChEBI" id="CHEBI:15378"/>
        <dbReference type="ChEBI" id="CHEBI:29749"/>
        <dbReference type="ChEBI" id="CHEBI:30616"/>
        <dbReference type="ChEBI" id="CHEBI:33019"/>
        <dbReference type="ChEBI" id="CHEBI:192350"/>
    </reaction>
    <physiologicalReaction direction="left-to-right" evidence="9">
        <dbReference type="Rhea" id="RHEA:72440"/>
    </physiologicalReaction>
</comment>
<comment type="catalytic activity">
    <reaction evidence="9">
        <text>(E)-feruloyl-AMP + CoA = (E)-feruloyl-CoA + AMP + H(+)</text>
        <dbReference type="Rhea" id="RHEA:72443"/>
        <dbReference type="ChEBI" id="CHEBI:15378"/>
        <dbReference type="ChEBI" id="CHEBI:57287"/>
        <dbReference type="ChEBI" id="CHEBI:87305"/>
        <dbReference type="ChEBI" id="CHEBI:192350"/>
        <dbReference type="ChEBI" id="CHEBI:456215"/>
    </reaction>
    <physiologicalReaction direction="left-to-right" evidence="9">
        <dbReference type="Rhea" id="RHEA:72444"/>
    </physiologicalReaction>
</comment>
<comment type="cofactor">
    <cofactor evidence="1">
        <name>Mg(2+)</name>
        <dbReference type="ChEBI" id="CHEBI:18420"/>
    </cofactor>
</comment>
<comment type="biophysicochemical properties">
    <kinetics>
        <KM evidence="2">6320 uM for cinnamate</KM>
        <KM evidence="2">38 uM for 4-coumarate</KM>
        <KM evidence="2">11 uM for caffeate</KM>
        <KM evidence="2">199 uM for ferulate</KM>
    </kinetics>
</comment>
<comment type="pathway">
    <text evidence="2">Phytoalexin biosynthesis; 3,4',5-trihydroxystilbene biosynthesis; 3,4',5-trihydroxystilbene from trans-4-coumarate: step 1/2.</text>
</comment>
<comment type="alternative products">
    <event type="alternative splicing"/>
    <isoform>
        <id>Q42524-1</id>
        <name>1</name>
        <sequence type="displayed"/>
    </isoform>
    <isoform>
        <id>Q42524-2</id>
        <name>2</name>
        <sequence type="described" ref="VSP_008911"/>
    </isoform>
</comment>
<comment type="tissue specificity">
    <text evidence="2 4">Preferentially expressed in roots, bolting stems and siliques. Also detected in leaves.</text>
</comment>
<comment type="induction">
    <text evidence="2 5">By wounding, UV irradiation, and pathogen attack.</text>
</comment>
<comment type="domain">
    <text evidence="3">Both substrate-binding domains (SBD1 and SBD2) are involved in the substrate recognition, and are sufficient to confer the substrate specificity.</text>
</comment>
<comment type="similarity">
    <text evidence="8">Belongs to the ATP-dependent AMP-binding enzyme family.</text>
</comment>
<dbReference type="EC" id="6.2.1.12" evidence="2"/>
<dbReference type="EC" id="6.2.1.34" evidence="2"/>
<dbReference type="EMBL" id="U18675">
    <property type="protein sequence ID" value="AAA82888.1"/>
    <property type="molecule type" value="mRNA"/>
</dbReference>
<dbReference type="EMBL" id="AF106084">
    <property type="protein sequence ID" value="AAD47191.1"/>
    <property type="molecule type" value="Genomic_DNA"/>
</dbReference>
<dbReference type="EMBL" id="AY376729">
    <property type="protein sequence ID" value="AAQ86588.1"/>
    <property type="molecule type" value="mRNA"/>
</dbReference>
<dbReference type="EMBL" id="AC025294">
    <property type="protein sequence ID" value="AAG50881.1"/>
    <property type="molecule type" value="Genomic_DNA"/>
</dbReference>
<dbReference type="EMBL" id="CP002684">
    <property type="protein sequence ID" value="AEE32698.1"/>
    <property type="molecule type" value="Genomic_DNA"/>
</dbReference>
<dbReference type="EMBL" id="CP002684">
    <property type="protein sequence ID" value="AEE32699.1"/>
    <property type="molecule type" value="Genomic_DNA"/>
</dbReference>
<dbReference type="EMBL" id="AY075622">
    <property type="protein sequence ID" value="AAL91633.1"/>
    <property type="molecule type" value="mRNA"/>
</dbReference>
<dbReference type="EMBL" id="AY099747">
    <property type="protein sequence ID" value="AAM20598.1"/>
    <property type="molecule type" value="mRNA"/>
</dbReference>
<dbReference type="EMBL" id="AY133582">
    <property type="protein sequence ID" value="AAM91412.1"/>
    <property type="molecule type" value="mRNA"/>
</dbReference>
<dbReference type="PIR" id="S57784">
    <property type="entry name" value="S57784"/>
</dbReference>
<dbReference type="RefSeq" id="NP_175579.1">
    <molecule id="Q42524-1"/>
    <property type="nucleotide sequence ID" value="NM_104046.3"/>
</dbReference>
<dbReference type="RefSeq" id="NP_849793.1">
    <molecule id="Q42524-2"/>
    <property type="nucleotide sequence ID" value="NM_179462.2"/>
</dbReference>
<dbReference type="PDB" id="3TSY">
    <property type="method" value="X-ray"/>
    <property type="resolution" value="3.10 A"/>
    <property type="chains" value="A=1-561"/>
</dbReference>
<dbReference type="PDBsum" id="3TSY"/>
<dbReference type="SMR" id="Q42524"/>
<dbReference type="FunCoup" id="Q42524">
    <property type="interactions" value="2128"/>
</dbReference>
<dbReference type="IntAct" id="Q42524">
    <property type="interactions" value="3"/>
</dbReference>
<dbReference type="STRING" id="3702.Q42524"/>
<dbReference type="TCDB" id="4.C.1.1.7">
    <property type="family name" value="the fatty acid group translocation (fat) family"/>
</dbReference>
<dbReference type="iPTMnet" id="Q42524"/>
<dbReference type="MetOSite" id="Q42524"/>
<dbReference type="PaxDb" id="3702-AT1G51680.1"/>
<dbReference type="ProteomicsDB" id="245088">
    <molecule id="Q42524-1"/>
</dbReference>
<dbReference type="EnsemblPlants" id="AT1G51680.1">
    <molecule id="Q42524-1"/>
    <property type="protein sequence ID" value="AT1G51680.1"/>
    <property type="gene ID" value="AT1G51680"/>
</dbReference>
<dbReference type="EnsemblPlants" id="AT1G51680.2">
    <molecule id="Q42524-2"/>
    <property type="protein sequence ID" value="AT1G51680.2"/>
    <property type="gene ID" value="AT1G51680"/>
</dbReference>
<dbReference type="GeneID" id="841593"/>
<dbReference type="Gramene" id="AT1G51680.1">
    <molecule id="Q42524-1"/>
    <property type="protein sequence ID" value="AT1G51680.1"/>
    <property type="gene ID" value="AT1G51680"/>
</dbReference>
<dbReference type="Gramene" id="AT1G51680.2">
    <molecule id="Q42524-2"/>
    <property type="protein sequence ID" value="AT1G51680.2"/>
    <property type="gene ID" value="AT1G51680"/>
</dbReference>
<dbReference type="KEGG" id="ath:AT1G51680"/>
<dbReference type="Araport" id="AT1G51680"/>
<dbReference type="TAIR" id="AT1G51680">
    <property type="gene designation" value="4CL1"/>
</dbReference>
<dbReference type="eggNOG" id="KOG1176">
    <property type="taxonomic scope" value="Eukaryota"/>
</dbReference>
<dbReference type="HOGENOM" id="CLU_000022_59_2_1"/>
<dbReference type="InParanoid" id="Q42524"/>
<dbReference type="OMA" id="QLWTPLT"/>
<dbReference type="OrthoDB" id="10253869at2759"/>
<dbReference type="PhylomeDB" id="Q42524"/>
<dbReference type="BioCyc" id="ARA:AT1G51680-MONOMER"/>
<dbReference type="BioCyc" id="MetaCyc:AT1G51680-MONOMER"/>
<dbReference type="BRENDA" id="6.2.1.12">
    <property type="organism ID" value="399"/>
</dbReference>
<dbReference type="SABIO-RK" id="Q42524"/>
<dbReference type="UniPathway" id="UPA00372">
    <property type="reaction ID" value="UER00547"/>
</dbReference>
<dbReference type="PRO" id="PR:Q42524"/>
<dbReference type="Proteomes" id="UP000006548">
    <property type="component" value="Chromosome 1"/>
</dbReference>
<dbReference type="ExpressionAtlas" id="Q42524">
    <property type="expression patterns" value="baseline and differential"/>
</dbReference>
<dbReference type="GO" id="GO:0005737">
    <property type="term" value="C:cytoplasm"/>
    <property type="evidence" value="ECO:0000314"/>
    <property type="project" value="TAIR"/>
</dbReference>
<dbReference type="GO" id="GO:0106286">
    <property type="term" value="F:(E)-caffeate-CoA ligase activity"/>
    <property type="evidence" value="ECO:0007669"/>
    <property type="project" value="RHEA"/>
</dbReference>
<dbReference type="GO" id="GO:0016207">
    <property type="term" value="F:4-coumarate-CoA ligase activity"/>
    <property type="evidence" value="ECO:0000314"/>
    <property type="project" value="TAIR"/>
</dbReference>
<dbReference type="GO" id="GO:0005524">
    <property type="term" value="F:ATP binding"/>
    <property type="evidence" value="ECO:0007669"/>
    <property type="project" value="UniProtKB-KW"/>
</dbReference>
<dbReference type="GO" id="GO:0050563">
    <property type="term" value="F:trans-feruloyl-CoA synthase activity"/>
    <property type="evidence" value="ECO:0007669"/>
    <property type="project" value="RHEA"/>
</dbReference>
<dbReference type="GO" id="GO:0009698">
    <property type="term" value="P:phenylpropanoid metabolic process"/>
    <property type="evidence" value="ECO:0000304"/>
    <property type="project" value="TAIR"/>
</dbReference>
<dbReference type="CDD" id="cd05904">
    <property type="entry name" value="4CL"/>
    <property type="match status" value="1"/>
</dbReference>
<dbReference type="FunFam" id="3.30.300.30:FF:000007">
    <property type="entry name" value="4-coumarate--CoA ligase 2"/>
    <property type="match status" value="1"/>
</dbReference>
<dbReference type="FunFam" id="3.40.50.12780:FF:000003">
    <property type="entry name" value="Long-chain-fatty-acid--CoA ligase FadD"/>
    <property type="match status" value="1"/>
</dbReference>
<dbReference type="Gene3D" id="3.30.300.30">
    <property type="match status" value="1"/>
</dbReference>
<dbReference type="Gene3D" id="3.40.50.12780">
    <property type="entry name" value="N-terminal domain of ligase-like"/>
    <property type="match status" value="1"/>
</dbReference>
<dbReference type="InterPro" id="IPR025110">
    <property type="entry name" value="AMP-bd_C"/>
</dbReference>
<dbReference type="InterPro" id="IPR045851">
    <property type="entry name" value="AMP-bd_C_sf"/>
</dbReference>
<dbReference type="InterPro" id="IPR020845">
    <property type="entry name" value="AMP-binding_CS"/>
</dbReference>
<dbReference type="InterPro" id="IPR000873">
    <property type="entry name" value="AMP-dep_synth/lig_dom"/>
</dbReference>
<dbReference type="InterPro" id="IPR042099">
    <property type="entry name" value="ANL_N_sf"/>
</dbReference>
<dbReference type="PANTHER" id="PTHR24096:SF352">
    <property type="entry name" value="4-COUMARATE--COA LIGASE 1"/>
    <property type="match status" value="1"/>
</dbReference>
<dbReference type="PANTHER" id="PTHR24096">
    <property type="entry name" value="LONG-CHAIN-FATTY-ACID--COA LIGASE"/>
    <property type="match status" value="1"/>
</dbReference>
<dbReference type="Pfam" id="PF00501">
    <property type="entry name" value="AMP-binding"/>
    <property type="match status" value="1"/>
</dbReference>
<dbReference type="Pfam" id="PF13193">
    <property type="entry name" value="AMP-binding_C"/>
    <property type="match status" value="1"/>
</dbReference>
<dbReference type="SUPFAM" id="SSF56801">
    <property type="entry name" value="Acetyl-CoA synthetase-like"/>
    <property type="match status" value="1"/>
</dbReference>
<dbReference type="PROSITE" id="PS00455">
    <property type="entry name" value="AMP_BINDING"/>
    <property type="match status" value="1"/>
</dbReference>